<evidence type="ECO:0000250" key="1"/>
<evidence type="ECO:0000250" key="2">
    <source>
        <dbReference type="UniProtKB" id="Q6ZVM7"/>
    </source>
</evidence>
<evidence type="ECO:0000255" key="3">
    <source>
        <dbReference type="PROSITE-ProRule" id="PRU00218"/>
    </source>
</evidence>
<evidence type="ECO:0000255" key="4">
    <source>
        <dbReference type="PROSITE-ProRule" id="PRU00373"/>
    </source>
</evidence>
<evidence type="ECO:0000256" key="5">
    <source>
        <dbReference type="SAM" id="MobiDB-lite"/>
    </source>
</evidence>
<evidence type="ECO:0000269" key="6">
    <source>
    </source>
</evidence>
<evidence type="ECO:0000303" key="7">
    <source>
    </source>
</evidence>
<evidence type="ECO:0000303" key="8">
    <source>
    </source>
</evidence>
<evidence type="ECO:0000305" key="9"/>
<evidence type="ECO:0007744" key="10">
    <source>
    </source>
</evidence>
<feature type="chain" id="PRO_0000278791" description="TOM1-like protein 2">
    <location>
        <begin position="1"/>
        <end position="507"/>
    </location>
</feature>
<feature type="domain" description="VHS" evidence="3">
    <location>
        <begin position="20"/>
        <end position="152"/>
    </location>
</feature>
<feature type="domain" description="GAT" evidence="4">
    <location>
        <begin position="219"/>
        <end position="307"/>
    </location>
</feature>
<feature type="region of interest" description="Disordered" evidence="5">
    <location>
        <begin position="164"/>
        <end position="200"/>
    </location>
</feature>
<feature type="region of interest" description="Disordered" evidence="5">
    <location>
        <begin position="466"/>
        <end position="507"/>
    </location>
</feature>
<feature type="short sequence motif" description="Clathrin-binding">
    <location>
        <begin position="329"/>
        <end position="334"/>
    </location>
</feature>
<feature type="compositionally biased region" description="Basic and acidic residues" evidence="5">
    <location>
        <begin position="498"/>
        <end position="507"/>
    </location>
</feature>
<feature type="modified residue" description="Phosphoserine" evidence="10">
    <location>
        <position position="160"/>
    </location>
</feature>
<feature type="modified residue" description="Phosphothreonine" evidence="2">
    <location>
        <position position="164"/>
    </location>
</feature>
<feature type="splice variant" id="VSP_023393" description="In isoform 5." evidence="8">
    <original>ELNRTCRAMQHRIVELISRVSNEEVTE</original>
    <variation>VFQVCPSTAHESNRETCELLVWRFLEK</variation>
    <location>
        <begin position="260"/>
        <end position="286"/>
    </location>
</feature>
<feature type="splice variant" id="VSP_023394" description="In isoform 5." evidence="8">
    <location>
        <begin position="287"/>
        <end position="507"/>
    </location>
</feature>
<feature type="splice variant" id="VSP_023395" description="In isoform 4." evidence="8">
    <original>IPVAQPSVMDDIEVWLRTDLKGDD</original>
    <variation>EMYGNACLSAWQGRRRLPGPPGLE</variation>
    <location>
        <begin position="427"/>
        <end position="450"/>
    </location>
</feature>
<feature type="splice variant" id="VSP_023396" description="In isoform 2." evidence="7">
    <location>
        <begin position="427"/>
        <end position="446"/>
    </location>
</feature>
<feature type="splice variant" id="VSP_023397" description="In isoform 3." evidence="8">
    <original>IPVAQPSVMDDIEV</original>
    <variation>VGLHTCVLPTVFWR</variation>
    <location>
        <begin position="427"/>
        <end position="440"/>
    </location>
</feature>
<feature type="splice variant" id="VSP_023398" description="In isoform 3." evidence="8">
    <location>
        <begin position="441"/>
        <end position="507"/>
    </location>
</feature>
<feature type="splice variant" id="VSP_023399" description="In isoform 4." evidence="8">
    <location>
        <begin position="451"/>
        <end position="507"/>
    </location>
</feature>
<feature type="sequence conflict" description="In Ref. 4; AAH62947." evidence="9" ref="4">
    <original>E</original>
    <variation>K</variation>
    <location>
        <position position="42"/>
    </location>
</feature>
<feature type="sequence conflict" description="In Ref. 2; BAC29576." evidence="9" ref="2">
    <original>S</original>
    <variation>G</variation>
    <location>
        <position position="131"/>
    </location>
</feature>
<feature type="sequence conflict" description="In Ref. 1; AAL77033." evidence="9" ref="1">
    <original>A</original>
    <variation>T</variation>
    <location>
        <position position="414"/>
    </location>
</feature>
<feature type="sequence conflict" description="In Ref. 2; BAC31458." evidence="9" ref="2">
    <original>D</original>
    <variation>G</variation>
    <location>
        <position position="418"/>
    </location>
</feature>
<keyword id="KW-0025">Alternative splicing</keyword>
<keyword id="KW-0597">Phosphoprotein</keyword>
<keyword id="KW-0653">Protein transport</keyword>
<keyword id="KW-1185">Reference proteome</keyword>
<keyword id="KW-0813">Transport</keyword>
<accession>Q5SRX1</accession>
<accession>A0JP66</accession>
<accession>Q5SRX7</accession>
<accession>Q5SRY0</accession>
<accession>Q6P5D7</accession>
<accession>Q8C6J0</accession>
<accession>Q8C935</accession>
<accession>Q8CB51</accession>
<accession>Q8R4H1</accession>
<sequence>MEFLLGNPFSTPVGQCLEKATDGSLQSEDWTLNMEICDIINETEEGPKDAIRALKKRLSGNRNYREVMLALTVLETCVKNCGHRFHLLVANRDFIDSVLVKIISPKNNPPTIVQDKVLALIQAWADAFRSSPDLTGVVHIYEELKRRGIEFPMADLDALSPIHTPQRSVPEMDPAATIPRSQTQPRTTAGTYSSPPPASYSTLQAPALSVTGPITANSEQIARLRSELDIVRGNTKVMSEMLTEMVPGQEDSSDLELLQELNRTCRAMQHRIVELISRVSNEEVTEELLHVNDDLNNVFLRYERFERYRSGRSVQNASNGVLSEVTEDNLIDLGPGSPAVVSPMVGSTAPPSSLSSQLAGLDLGTESVSGTLSSLQQCKPQDGFDMFAQTRGNSLAEQRKTVTYEDPQAVGGLASALDNRKQNSEMIPVAQPSVMDDIEVWLRTDLKGDDLEEGVTSEEFDKFLEERAKAAETVPDLPSPPTEAPAPASNTSTRKKPERSDDALFAL</sequence>
<reference key="1">
    <citation type="journal article" date="2002" name="Genome Res.">
        <title>Genes in a refined Smith-Magenis syndrome critical deletion interval on chromosome 17p11.2 and the syntenic region of the mouse.</title>
        <authorList>
            <person name="Bi W."/>
            <person name="Yan J."/>
            <person name="Stankiewicz P."/>
            <person name="Park S.-S."/>
            <person name="Walz K."/>
            <person name="Boerkoel C.F."/>
            <person name="Potocki L."/>
            <person name="Shaffer L.G."/>
            <person name="Devriendt K."/>
            <person name="Nowaczyk M.J.M."/>
            <person name="Inoue K."/>
            <person name="Lupski J.R."/>
        </authorList>
    </citation>
    <scope>NUCLEOTIDE SEQUENCE [MRNA] (ISOFORM 1)</scope>
    <scope>TISSUE SPECIFICITY</scope>
    <source>
        <strain>C57BL/6J</strain>
    </source>
</reference>
<reference key="2">
    <citation type="journal article" date="2005" name="Science">
        <title>The transcriptional landscape of the mammalian genome.</title>
        <authorList>
            <person name="Carninci P."/>
            <person name="Kasukawa T."/>
            <person name="Katayama S."/>
            <person name="Gough J."/>
            <person name="Frith M.C."/>
            <person name="Maeda N."/>
            <person name="Oyama R."/>
            <person name="Ravasi T."/>
            <person name="Lenhard B."/>
            <person name="Wells C."/>
            <person name="Kodzius R."/>
            <person name="Shimokawa K."/>
            <person name="Bajic V.B."/>
            <person name="Brenner S.E."/>
            <person name="Batalov S."/>
            <person name="Forrest A.R."/>
            <person name="Zavolan M."/>
            <person name="Davis M.J."/>
            <person name="Wilming L.G."/>
            <person name="Aidinis V."/>
            <person name="Allen J.E."/>
            <person name="Ambesi-Impiombato A."/>
            <person name="Apweiler R."/>
            <person name="Aturaliya R.N."/>
            <person name="Bailey T.L."/>
            <person name="Bansal M."/>
            <person name="Baxter L."/>
            <person name="Beisel K.W."/>
            <person name="Bersano T."/>
            <person name="Bono H."/>
            <person name="Chalk A.M."/>
            <person name="Chiu K.P."/>
            <person name="Choudhary V."/>
            <person name="Christoffels A."/>
            <person name="Clutterbuck D.R."/>
            <person name="Crowe M.L."/>
            <person name="Dalla E."/>
            <person name="Dalrymple B.P."/>
            <person name="de Bono B."/>
            <person name="Della Gatta G."/>
            <person name="di Bernardo D."/>
            <person name="Down T."/>
            <person name="Engstrom P."/>
            <person name="Fagiolini M."/>
            <person name="Faulkner G."/>
            <person name="Fletcher C.F."/>
            <person name="Fukushima T."/>
            <person name="Furuno M."/>
            <person name="Futaki S."/>
            <person name="Gariboldi M."/>
            <person name="Georgii-Hemming P."/>
            <person name="Gingeras T.R."/>
            <person name="Gojobori T."/>
            <person name="Green R.E."/>
            <person name="Gustincich S."/>
            <person name="Harbers M."/>
            <person name="Hayashi Y."/>
            <person name="Hensch T.K."/>
            <person name="Hirokawa N."/>
            <person name="Hill D."/>
            <person name="Huminiecki L."/>
            <person name="Iacono M."/>
            <person name="Ikeo K."/>
            <person name="Iwama A."/>
            <person name="Ishikawa T."/>
            <person name="Jakt M."/>
            <person name="Kanapin A."/>
            <person name="Katoh M."/>
            <person name="Kawasawa Y."/>
            <person name="Kelso J."/>
            <person name="Kitamura H."/>
            <person name="Kitano H."/>
            <person name="Kollias G."/>
            <person name="Krishnan S.P."/>
            <person name="Kruger A."/>
            <person name="Kummerfeld S.K."/>
            <person name="Kurochkin I.V."/>
            <person name="Lareau L.F."/>
            <person name="Lazarevic D."/>
            <person name="Lipovich L."/>
            <person name="Liu J."/>
            <person name="Liuni S."/>
            <person name="McWilliam S."/>
            <person name="Madan Babu M."/>
            <person name="Madera M."/>
            <person name="Marchionni L."/>
            <person name="Matsuda H."/>
            <person name="Matsuzawa S."/>
            <person name="Miki H."/>
            <person name="Mignone F."/>
            <person name="Miyake S."/>
            <person name="Morris K."/>
            <person name="Mottagui-Tabar S."/>
            <person name="Mulder N."/>
            <person name="Nakano N."/>
            <person name="Nakauchi H."/>
            <person name="Ng P."/>
            <person name="Nilsson R."/>
            <person name="Nishiguchi S."/>
            <person name="Nishikawa S."/>
            <person name="Nori F."/>
            <person name="Ohara O."/>
            <person name="Okazaki Y."/>
            <person name="Orlando V."/>
            <person name="Pang K.C."/>
            <person name="Pavan W.J."/>
            <person name="Pavesi G."/>
            <person name="Pesole G."/>
            <person name="Petrovsky N."/>
            <person name="Piazza S."/>
            <person name="Reed J."/>
            <person name="Reid J.F."/>
            <person name="Ring B.Z."/>
            <person name="Ringwald M."/>
            <person name="Rost B."/>
            <person name="Ruan Y."/>
            <person name="Salzberg S.L."/>
            <person name="Sandelin A."/>
            <person name="Schneider C."/>
            <person name="Schoenbach C."/>
            <person name="Sekiguchi K."/>
            <person name="Semple C.A."/>
            <person name="Seno S."/>
            <person name="Sessa L."/>
            <person name="Sheng Y."/>
            <person name="Shibata Y."/>
            <person name="Shimada H."/>
            <person name="Shimada K."/>
            <person name="Silva D."/>
            <person name="Sinclair B."/>
            <person name="Sperling S."/>
            <person name="Stupka E."/>
            <person name="Sugiura K."/>
            <person name="Sultana R."/>
            <person name="Takenaka Y."/>
            <person name="Taki K."/>
            <person name="Tammoja K."/>
            <person name="Tan S.L."/>
            <person name="Tang S."/>
            <person name="Taylor M.S."/>
            <person name="Tegner J."/>
            <person name="Teichmann S.A."/>
            <person name="Ueda H.R."/>
            <person name="van Nimwegen E."/>
            <person name="Verardo R."/>
            <person name="Wei C.L."/>
            <person name="Yagi K."/>
            <person name="Yamanishi H."/>
            <person name="Zabarovsky E."/>
            <person name="Zhu S."/>
            <person name="Zimmer A."/>
            <person name="Hide W."/>
            <person name="Bult C."/>
            <person name="Grimmond S.M."/>
            <person name="Teasdale R.D."/>
            <person name="Liu E.T."/>
            <person name="Brusic V."/>
            <person name="Quackenbush J."/>
            <person name="Wahlestedt C."/>
            <person name="Mattick J.S."/>
            <person name="Hume D.A."/>
            <person name="Kai C."/>
            <person name="Sasaki D."/>
            <person name="Tomaru Y."/>
            <person name="Fukuda S."/>
            <person name="Kanamori-Katayama M."/>
            <person name="Suzuki M."/>
            <person name="Aoki J."/>
            <person name="Arakawa T."/>
            <person name="Iida J."/>
            <person name="Imamura K."/>
            <person name="Itoh M."/>
            <person name="Kato T."/>
            <person name="Kawaji H."/>
            <person name="Kawagashira N."/>
            <person name="Kawashima T."/>
            <person name="Kojima M."/>
            <person name="Kondo S."/>
            <person name="Konno H."/>
            <person name="Nakano K."/>
            <person name="Ninomiya N."/>
            <person name="Nishio T."/>
            <person name="Okada M."/>
            <person name="Plessy C."/>
            <person name="Shibata K."/>
            <person name="Shiraki T."/>
            <person name="Suzuki S."/>
            <person name="Tagami M."/>
            <person name="Waki K."/>
            <person name="Watahiki A."/>
            <person name="Okamura-Oho Y."/>
            <person name="Suzuki H."/>
            <person name="Kawai J."/>
            <person name="Hayashizaki Y."/>
        </authorList>
    </citation>
    <scope>NUCLEOTIDE SEQUENCE [LARGE SCALE MRNA] (ISOFORMS 3; 4 AND 5)</scope>
    <source>
        <strain>C57BL/6J</strain>
        <tissue>Cerebellum</tissue>
        <tissue>Lung</tissue>
        <tissue>Ovary</tissue>
        <tissue>Vagina</tissue>
    </source>
</reference>
<reference key="3">
    <citation type="journal article" date="2009" name="PLoS Biol.">
        <title>Lineage-specific biology revealed by a finished genome assembly of the mouse.</title>
        <authorList>
            <person name="Church D.M."/>
            <person name="Goodstadt L."/>
            <person name="Hillier L.W."/>
            <person name="Zody M.C."/>
            <person name="Goldstein S."/>
            <person name="She X."/>
            <person name="Bult C.J."/>
            <person name="Agarwala R."/>
            <person name="Cherry J.L."/>
            <person name="DiCuccio M."/>
            <person name="Hlavina W."/>
            <person name="Kapustin Y."/>
            <person name="Meric P."/>
            <person name="Maglott D."/>
            <person name="Birtle Z."/>
            <person name="Marques A.C."/>
            <person name="Graves T."/>
            <person name="Zhou S."/>
            <person name="Teague B."/>
            <person name="Potamousis K."/>
            <person name="Churas C."/>
            <person name="Place M."/>
            <person name="Herschleb J."/>
            <person name="Runnheim R."/>
            <person name="Forrest D."/>
            <person name="Amos-Landgraf J."/>
            <person name="Schwartz D.C."/>
            <person name="Cheng Z."/>
            <person name="Lindblad-Toh K."/>
            <person name="Eichler E.E."/>
            <person name="Ponting C.P."/>
        </authorList>
    </citation>
    <scope>NUCLEOTIDE SEQUENCE [LARGE SCALE GENOMIC DNA]</scope>
    <source>
        <strain>C57BL/6J</strain>
    </source>
</reference>
<reference key="4">
    <citation type="journal article" date="2004" name="Genome Res.">
        <title>The status, quality, and expansion of the NIH full-length cDNA project: the Mammalian Gene Collection (MGC).</title>
        <authorList>
            <consortium name="The MGC Project Team"/>
        </authorList>
    </citation>
    <scope>NUCLEOTIDE SEQUENCE [LARGE SCALE MRNA] (ISOFORM 2)</scope>
    <source>
        <strain>C57BL/6J</strain>
        <tissue>Brain</tissue>
    </source>
</reference>
<reference key="5">
    <citation type="journal article" date="2010" name="Cell">
        <title>A tissue-specific atlas of mouse protein phosphorylation and expression.</title>
        <authorList>
            <person name="Huttlin E.L."/>
            <person name="Jedrychowski M.P."/>
            <person name="Elias J.E."/>
            <person name="Goswami T."/>
            <person name="Rad R."/>
            <person name="Beausoleil S.A."/>
            <person name="Villen J."/>
            <person name="Haas W."/>
            <person name="Sowa M.E."/>
            <person name="Gygi S.P."/>
        </authorList>
    </citation>
    <scope>PHOSPHORYLATION [LARGE SCALE ANALYSIS] AT SER-160</scope>
    <scope>IDENTIFICATION BY MASS SPECTROMETRY [LARGE SCALE ANALYSIS]</scope>
    <source>
        <tissue>Brain</tissue>
        <tissue>Heart</tissue>
        <tissue>Kidney</tissue>
        <tissue>Lung</tissue>
        <tissue>Spleen</tissue>
        <tissue>Testis</tissue>
    </source>
</reference>
<gene>
    <name type="primary">Tom1l2</name>
</gene>
<protein>
    <recommendedName>
        <fullName>TOM1-like protein 2</fullName>
    </recommendedName>
    <alternativeName>
        <fullName>Target of Myb-like protein 2</fullName>
    </alternativeName>
</protein>
<organism>
    <name type="scientific">Mus musculus</name>
    <name type="common">Mouse</name>
    <dbReference type="NCBI Taxonomy" id="10090"/>
    <lineage>
        <taxon>Eukaryota</taxon>
        <taxon>Metazoa</taxon>
        <taxon>Chordata</taxon>
        <taxon>Craniata</taxon>
        <taxon>Vertebrata</taxon>
        <taxon>Euteleostomi</taxon>
        <taxon>Mammalia</taxon>
        <taxon>Eutheria</taxon>
        <taxon>Euarchontoglires</taxon>
        <taxon>Glires</taxon>
        <taxon>Rodentia</taxon>
        <taxon>Myomorpha</taxon>
        <taxon>Muroidea</taxon>
        <taxon>Muridae</taxon>
        <taxon>Murinae</taxon>
        <taxon>Mus</taxon>
        <taxon>Mus</taxon>
    </lineage>
</organism>
<proteinExistence type="evidence at protein level"/>
<dbReference type="EMBL" id="AF467887">
    <property type="protein sequence ID" value="AAL77033.1"/>
    <property type="molecule type" value="mRNA"/>
</dbReference>
<dbReference type="EMBL" id="AK036788">
    <property type="protein sequence ID" value="BAC29576.1"/>
    <property type="molecule type" value="mRNA"/>
</dbReference>
<dbReference type="EMBL" id="AK043095">
    <property type="protein sequence ID" value="BAC31458.1"/>
    <property type="molecule type" value="mRNA"/>
</dbReference>
<dbReference type="EMBL" id="AK054531">
    <property type="protein sequence ID" value="BAC35813.1"/>
    <property type="molecule type" value="mRNA"/>
</dbReference>
<dbReference type="EMBL" id="AK166040">
    <property type="protein sequence ID" value="BAE38537.1"/>
    <property type="molecule type" value="mRNA"/>
</dbReference>
<dbReference type="EMBL" id="AL596090">
    <property type="status" value="NOT_ANNOTATED_CDS"/>
    <property type="molecule type" value="Genomic_DNA"/>
</dbReference>
<dbReference type="EMBL" id="AL669954">
    <property type="status" value="NOT_ANNOTATED_CDS"/>
    <property type="molecule type" value="Genomic_DNA"/>
</dbReference>
<dbReference type="EMBL" id="BC062947">
    <property type="protein sequence ID" value="AAH62947.2"/>
    <property type="molecule type" value="mRNA"/>
</dbReference>
<dbReference type="EMBL" id="BC127266">
    <property type="protein sequence ID" value="AAI27267.1"/>
    <property type="molecule type" value="mRNA"/>
</dbReference>
<dbReference type="CCDS" id="CCDS24786.1">
    <molecule id="Q5SRX1-1"/>
</dbReference>
<dbReference type="CCDS" id="CCDS24787.1">
    <molecule id="Q5SRX1-3"/>
</dbReference>
<dbReference type="CCDS" id="CCDS36171.1">
    <molecule id="Q5SRX1-2"/>
</dbReference>
<dbReference type="CCDS" id="CCDS88165.1">
    <molecule id="Q5SRX1-4"/>
</dbReference>
<dbReference type="RefSeq" id="NP_001034181.1">
    <molecule id="Q5SRX1-2"/>
    <property type="nucleotide sequence ID" value="NM_001039092.4"/>
</dbReference>
<dbReference type="RefSeq" id="NP_001034182.1">
    <molecule id="Q5SRX1-3"/>
    <property type="nucleotide sequence ID" value="NM_001039093.1"/>
</dbReference>
<dbReference type="RefSeq" id="NP_001346739.1">
    <molecule id="Q5SRX1-4"/>
    <property type="nucleotide sequence ID" value="NM_001359810.1"/>
</dbReference>
<dbReference type="RefSeq" id="NP_694720.2">
    <molecule id="Q5SRX1-1"/>
    <property type="nucleotide sequence ID" value="NM_153080.3"/>
</dbReference>
<dbReference type="RefSeq" id="XP_006532930.1">
    <property type="nucleotide sequence ID" value="XM_006532867.3"/>
</dbReference>
<dbReference type="SMR" id="Q5SRX1"/>
<dbReference type="BioGRID" id="229791">
    <property type="interactions" value="9"/>
</dbReference>
<dbReference type="FunCoup" id="Q5SRX1">
    <property type="interactions" value="1035"/>
</dbReference>
<dbReference type="IntAct" id="Q5SRX1">
    <property type="interactions" value="1"/>
</dbReference>
<dbReference type="MINT" id="Q5SRX1"/>
<dbReference type="STRING" id="10090.ENSMUSP00000099744"/>
<dbReference type="GlyGen" id="Q5SRX1">
    <property type="glycosylation" value="4 sites, 1 O-linked glycan (4 sites)"/>
</dbReference>
<dbReference type="iPTMnet" id="Q5SRX1"/>
<dbReference type="PhosphoSitePlus" id="Q5SRX1"/>
<dbReference type="SwissPalm" id="Q5SRX1"/>
<dbReference type="jPOST" id="Q5SRX1"/>
<dbReference type="PaxDb" id="10090-ENSMUSP00000099744"/>
<dbReference type="PeptideAtlas" id="Q5SRX1"/>
<dbReference type="ProteomicsDB" id="258906">
    <molecule id="Q5SRX1-1"/>
</dbReference>
<dbReference type="ProteomicsDB" id="258907">
    <molecule id="Q5SRX1-2"/>
</dbReference>
<dbReference type="ProteomicsDB" id="258908">
    <molecule id="Q5SRX1-3"/>
</dbReference>
<dbReference type="ProteomicsDB" id="258909">
    <molecule id="Q5SRX1-4"/>
</dbReference>
<dbReference type="ProteomicsDB" id="258910">
    <molecule id="Q5SRX1-5"/>
</dbReference>
<dbReference type="Pumba" id="Q5SRX1"/>
<dbReference type="Antibodypedia" id="13414">
    <property type="antibodies" value="143 antibodies from 24 providers"/>
</dbReference>
<dbReference type="DNASU" id="216810"/>
<dbReference type="Ensembl" id="ENSMUST00000064019.15">
    <molecule id="Q5SRX1-4"/>
    <property type="protein sequence ID" value="ENSMUSP00000063414.9"/>
    <property type="gene ID" value="ENSMUSG00000000538.19"/>
</dbReference>
<dbReference type="Ensembl" id="ENSMUST00000095254.12">
    <molecule id="Q5SRX1-2"/>
    <property type="protein sequence ID" value="ENSMUSP00000092884.6"/>
    <property type="gene ID" value="ENSMUSG00000000538.19"/>
</dbReference>
<dbReference type="Ensembl" id="ENSMUST00000102682.5">
    <molecule id="Q5SRX1-3"/>
    <property type="protein sequence ID" value="ENSMUSP00000099743.5"/>
    <property type="gene ID" value="ENSMUSG00000000538.19"/>
</dbReference>
<dbReference type="Ensembl" id="ENSMUST00000102683.11">
    <molecule id="Q5SRX1-1"/>
    <property type="protein sequence ID" value="ENSMUSP00000099744.5"/>
    <property type="gene ID" value="ENSMUSG00000000538.19"/>
</dbReference>
<dbReference type="GeneID" id="216810"/>
<dbReference type="KEGG" id="mmu:216810"/>
<dbReference type="UCSC" id="uc007jfq.1">
    <molecule id="Q5SRX1-1"/>
    <property type="organism name" value="mouse"/>
</dbReference>
<dbReference type="UCSC" id="uc007jfr.1">
    <molecule id="Q5SRX1-2"/>
    <property type="organism name" value="mouse"/>
</dbReference>
<dbReference type="UCSC" id="uc007jft.1">
    <molecule id="Q5SRX1-3"/>
    <property type="organism name" value="mouse"/>
</dbReference>
<dbReference type="AGR" id="MGI:2443306"/>
<dbReference type="CTD" id="146691"/>
<dbReference type="MGI" id="MGI:2443306">
    <property type="gene designation" value="Tom1l2"/>
</dbReference>
<dbReference type="VEuPathDB" id="HostDB:ENSMUSG00000000538"/>
<dbReference type="eggNOG" id="KOG1087">
    <property type="taxonomic scope" value="Eukaryota"/>
</dbReference>
<dbReference type="GeneTree" id="ENSGT00940000156940"/>
<dbReference type="HOGENOM" id="CLU_043812_3_0_1"/>
<dbReference type="InParanoid" id="Q5SRX1"/>
<dbReference type="OMA" id="VEMENWL"/>
<dbReference type="OrthoDB" id="2018246at2759"/>
<dbReference type="PhylomeDB" id="Q5SRX1"/>
<dbReference type="TreeFam" id="TF314105"/>
<dbReference type="BioGRID-ORCS" id="216810">
    <property type="hits" value="1 hit in 77 CRISPR screens"/>
</dbReference>
<dbReference type="CD-CODE" id="CE726F99">
    <property type="entry name" value="Postsynaptic density"/>
</dbReference>
<dbReference type="ChiTaRS" id="Tom1l2">
    <property type="organism name" value="mouse"/>
</dbReference>
<dbReference type="PRO" id="PR:Q5SRX1"/>
<dbReference type="Proteomes" id="UP000000589">
    <property type="component" value="Chromosome 11"/>
</dbReference>
<dbReference type="RNAct" id="Q5SRX1">
    <property type="molecule type" value="protein"/>
</dbReference>
<dbReference type="Bgee" id="ENSMUSG00000000538">
    <property type="expression patterns" value="Expressed in habenula and 213 other cell types or tissues"/>
</dbReference>
<dbReference type="ExpressionAtlas" id="Q5SRX1">
    <property type="expression patterns" value="baseline and differential"/>
</dbReference>
<dbReference type="GO" id="GO:0030276">
    <property type="term" value="F:clathrin binding"/>
    <property type="evidence" value="ECO:0007669"/>
    <property type="project" value="Ensembl"/>
</dbReference>
<dbReference type="GO" id="GO:0035091">
    <property type="term" value="F:phosphatidylinositol binding"/>
    <property type="evidence" value="ECO:0007669"/>
    <property type="project" value="InterPro"/>
</dbReference>
<dbReference type="GO" id="GO:0019901">
    <property type="term" value="F:protein kinase binding"/>
    <property type="evidence" value="ECO:0007669"/>
    <property type="project" value="Ensembl"/>
</dbReference>
<dbReference type="GO" id="GO:0043130">
    <property type="term" value="F:ubiquitin binding"/>
    <property type="evidence" value="ECO:0007669"/>
    <property type="project" value="InterPro"/>
</dbReference>
<dbReference type="GO" id="GO:0045839">
    <property type="term" value="P:negative regulation of mitotic nuclear division"/>
    <property type="evidence" value="ECO:0007669"/>
    <property type="project" value="Ensembl"/>
</dbReference>
<dbReference type="GO" id="GO:0015031">
    <property type="term" value="P:protein transport"/>
    <property type="evidence" value="ECO:0007669"/>
    <property type="project" value="UniProtKB-KW"/>
</dbReference>
<dbReference type="GO" id="GO:0007165">
    <property type="term" value="P:signal transduction"/>
    <property type="evidence" value="ECO:0007669"/>
    <property type="project" value="Ensembl"/>
</dbReference>
<dbReference type="CDD" id="cd14238">
    <property type="entry name" value="GAT_TM1L2"/>
    <property type="match status" value="1"/>
</dbReference>
<dbReference type="CDD" id="cd16996">
    <property type="entry name" value="VHS_Tom1L2"/>
    <property type="match status" value="1"/>
</dbReference>
<dbReference type="FunFam" id="1.20.58.160:FF:000001">
    <property type="entry name" value="TOM1-like protein 2 isoform X1"/>
    <property type="match status" value="1"/>
</dbReference>
<dbReference type="FunFam" id="1.25.40.90:FF:000003">
    <property type="entry name" value="TOM1-like protein 2 isoform X1"/>
    <property type="match status" value="1"/>
</dbReference>
<dbReference type="Gene3D" id="1.20.58.160">
    <property type="match status" value="1"/>
</dbReference>
<dbReference type="Gene3D" id="1.25.40.90">
    <property type="match status" value="1"/>
</dbReference>
<dbReference type="InterPro" id="IPR008942">
    <property type="entry name" value="ENTH_VHS"/>
</dbReference>
<dbReference type="InterPro" id="IPR004152">
    <property type="entry name" value="GAT_dom"/>
</dbReference>
<dbReference type="InterPro" id="IPR038425">
    <property type="entry name" value="GAT_sf"/>
</dbReference>
<dbReference type="InterPro" id="IPR014645">
    <property type="entry name" value="TOM1"/>
</dbReference>
<dbReference type="InterPro" id="IPR027429">
    <property type="entry name" value="TOM1L2_VHS_dom"/>
</dbReference>
<dbReference type="InterPro" id="IPR002014">
    <property type="entry name" value="VHS_dom"/>
</dbReference>
<dbReference type="PANTHER" id="PTHR13856:SF31">
    <property type="entry name" value="TOM1-LIKE PROTEIN 2"/>
    <property type="match status" value="1"/>
</dbReference>
<dbReference type="PANTHER" id="PTHR13856">
    <property type="entry name" value="VHS DOMAIN CONTAINING PROTEIN FAMILY"/>
    <property type="match status" value="1"/>
</dbReference>
<dbReference type="Pfam" id="PF03127">
    <property type="entry name" value="GAT"/>
    <property type="match status" value="1"/>
</dbReference>
<dbReference type="Pfam" id="PF00790">
    <property type="entry name" value="VHS"/>
    <property type="match status" value="1"/>
</dbReference>
<dbReference type="PIRSF" id="PIRSF036948">
    <property type="entry name" value="TOM1"/>
    <property type="match status" value="1"/>
</dbReference>
<dbReference type="SMART" id="SM00288">
    <property type="entry name" value="VHS"/>
    <property type="match status" value="1"/>
</dbReference>
<dbReference type="SUPFAM" id="SSF48464">
    <property type="entry name" value="ENTH/VHS domain"/>
    <property type="match status" value="1"/>
</dbReference>
<dbReference type="SUPFAM" id="SSF89009">
    <property type="entry name" value="GAT-like domain"/>
    <property type="match status" value="1"/>
</dbReference>
<dbReference type="PROSITE" id="PS50909">
    <property type="entry name" value="GAT"/>
    <property type="match status" value="1"/>
</dbReference>
<dbReference type="PROSITE" id="PS50179">
    <property type="entry name" value="VHS"/>
    <property type="match status" value="1"/>
</dbReference>
<comment type="function">
    <text evidence="2">Acts as a MYO6/Myosin VI adapter protein that targets myosin VI to endocytic structures (By similarity). May also play a role in recruiting clathrin to endosomes (By similarity). May regulate growth factor-induced mitogenic signaling (By similarity).</text>
</comment>
<comment type="subunit">
    <text evidence="2">Interacts with clathrin, SRC and TOLLIP (By similarity). Interacts with MYO6 (By similarity).</text>
</comment>
<comment type="alternative products">
    <event type="alternative splicing"/>
    <isoform>
        <id>Q5SRX1-1</id>
        <name>1</name>
        <sequence type="displayed"/>
    </isoform>
    <isoform>
        <id>Q5SRX1-2</id>
        <name>2</name>
        <sequence type="described" ref="VSP_023396"/>
    </isoform>
    <isoform>
        <id>Q5SRX1-3</id>
        <name>3</name>
        <sequence type="described" ref="VSP_023397 VSP_023398"/>
    </isoform>
    <isoform>
        <id>Q5SRX1-4</id>
        <name>4</name>
        <sequence type="described" ref="VSP_023395 VSP_023399"/>
    </isoform>
    <isoform>
        <id>Q5SRX1-5</id>
        <name>5</name>
        <sequence type="described" ref="VSP_023393 VSP_023394"/>
    </isoform>
</comment>
<comment type="tissue specificity">
    <text evidence="6">Ubiquitously expressed. Splicing pattern displays tissue specific variation.</text>
</comment>
<comment type="domain">
    <text evidence="1">The GAT domain mediates interaction with TOLLIP.</text>
</comment>
<comment type="miscellaneous">
    <molecule>Isoform 5</molecule>
    <text evidence="9">May be produced at very low levels due to a premature stop codon in the mRNA, leading to nonsense-mediated mRNA decay.</text>
</comment>
<comment type="similarity">
    <text evidence="9">Belongs to the TOM1 family.</text>
</comment>
<name>TM1L2_MOUSE</name>